<keyword id="KW-0233">DNA recombination</keyword>
<keyword id="KW-0238">DNA-binding</keyword>
<keyword id="KW-0804">Transcription</keyword>
<keyword id="KW-0805">Transcription regulation</keyword>
<keyword id="KW-0810">Translation regulation</keyword>
<proteinExistence type="inferred from homology"/>
<evidence type="ECO:0000255" key="1">
    <source>
        <dbReference type="HAMAP-Rule" id="MF_00380"/>
    </source>
</evidence>
<protein>
    <recommendedName>
        <fullName evidence="1">Integration host factor subunit alpha</fullName>
        <shortName evidence="1">IHF-alpha</shortName>
    </recommendedName>
</protein>
<comment type="function">
    <text evidence="1">This protein is one of the two subunits of integration host factor, a specific DNA-binding protein that functions in genetic recombination as well as in transcriptional and translational control.</text>
</comment>
<comment type="subunit">
    <text evidence="1">Heterodimer of an alpha and a beta chain.</text>
</comment>
<comment type="similarity">
    <text evidence="1">Belongs to the bacterial histone-like protein family.</text>
</comment>
<accession>B0VV83</accession>
<gene>
    <name evidence="1" type="primary">ihfA</name>
    <name evidence="1" type="synonym">himA</name>
    <name type="ordered locus">ABSDF2906</name>
</gene>
<organism>
    <name type="scientific">Acinetobacter baumannii (strain SDF)</name>
    <dbReference type="NCBI Taxonomy" id="509170"/>
    <lineage>
        <taxon>Bacteria</taxon>
        <taxon>Pseudomonadati</taxon>
        <taxon>Pseudomonadota</taxon>
        <taxon>Gammaproteobacteria</taxon>
        <taxon>Moraxellales</taxon>
        <taxon>Moraxellaceae</taxon>
        <taxon>Acinetobacter</taxon>
        <taxon>Acinetobacter calcoaceticus/baumannii complex</taxon>
    </lineage>
</organism>
<dbReference type="EMBL" id="CU468230">
    <property type="protein sequence ID" value="CAP02196.1"/>
    <property type="molecule type" value="Genomic_DNA"/>
</dbReference>
<dbReference type="SMR" id="B0VV83"/>
<dbReference type="KEGG" id="abm:ABSDF2906"/>
<dbReference type="HOGENOM" id="CLU_105066_1_3_6"/>
<dbReference type="Proteomes" id="UP000001741">
    <property type="component" value="Chromosome"/>
</dbReference>
<dbReference type="GO" id="GO:0005829">
    <property type="term" value="C:cytosol"/>
    <property type="evidence" value="ECO:0007669"/>
    <property type="project" value="TreeGrafter"/>
</dbReference>
<dbReference type="GO" id="GO:0003677">
    <property type="term" value="F:DNA binding"/>
    <property type="evidence" value="ECO:0007669"/>
    <property type="project" value="UniProtKB-UniRule"/>
</dbReference>
<dbReference type="GO" id="GO:0030527">
    <property type="term" value="F:structural constituent of chromatin"/>
    <property type="evidence" value="ECO:0007669"/>
    <property type="project" value="InterPro"/>
</dbReference>
<dbReference type="GO" id="GO:0006310">
    <property type="term" value="P:DNA recombination"/>
    <property type="evidence" value="ECO:0007669"/>
    <property type="project" value="UniProtKB-UniRule"/>
</dbReference>
<dbReference type="GO" id="GO:0009893">
    <property type="term" value="P:positive regulation of metabolic process"/>
    <property type="evidence" value="ECO:0007669"/>
    <property type="project" value="UniProtKB-ARBA"/>
</dbReference>
<dbReference type="GO" id="GO:0006355">
    <property type="term" value="P:regulation of DNA-templated transcription"/>
    <property type="evidence" value="ECO:0007669"/>
    <property type="project" value="UniProtKB-UniRule"/>
</dbReference>
<dbReference type="GO" id="GO:0006417">
    <property type="term" value="P:regulation of translation"/>
    <property type="evidence" value="ECO:0007669"/>
    <property type="project" value="UniProtKB-UniRule"/>
</dbReference>
<dbReference type="CDD" id="cd13835">
    <property type="entry name" value="IHF_A"/>
    <property type="match status" value="1"/>
</dbReference>
<dbReference type="FunFam" id="4.10.520.10:FF:000002">
    <property type="entry name" value="Integration host factor subunit alpha"/>
    <property type="match status" value="1"/>
</dbReference>
<dbReference type="Gene3D" id="4.10.520.10">
    <property type="entry name" value="IHF-like DNA-binding proteins"/>
    <property type="match status" value="1"/>
</dbReference>
<dbReference type="HAMAP" id="MF_00380">
    <property type="entry name" value="IHF_alpha"/>
    <property type="match status" value="1"/>
</dbReference>
<dbReference type="InterPro" id="IPR000119">
    <property type="entry name" value="Hist_DNA-bd"/>
</dbReference>
<dbReference type="InterPro" id="IPR020816">
    <property type="entry name" value="Histone-like_DNA-bd_CS"/>
</dbReference>
<dbReference type="InterPro" id="IPR010992">
    <property type="entry name" value="IHF-like_DNA-bd_dom_sf"/>
</dbReference>
<dbReference type="InterPro" id="IPR005684">
    <property type="entry name" value="IHF_alpha"/>
</dbReference>
<dbReference type="NCBIfam" id="TIGR00987">
    <property type="entry name" value="himA"/>
    <property type="match status" value="1"/>
</dbReference>
<dbReference type="NCBIfam" id="NF001401">
    <property type="entry name" value="PRK00285.1"/>
    <property type="match status" value="1"/>
</dbReference>
<dbReference type="PANTHER" id="PTHR33175">
    <property type="entry name" value="DNA-BINDING PROTEIN HU"/>
    <property type="match status" value="1"/>
</dbReference>
<dbReference type="PANTHER" id="PTHR33175:SF2">
    <property type="entry name" value="INTEGRATION HOST FACTOR SUBUNIT ALPHA"/>
    <property type="match status" value="1"/>
</dbReference>
<dbReference type="Pfam" id="PF00216">
    <property type="entry name" value="Bac_DNA_binding"/>
    <property type="match status" value="1"/>
</dbReference>
<dbReference type="PRINTS" id="PR01727">
    <property type="entry name" value="DNABINDINGHU"/>
</dbReference>
<dbReference type="SMART" id="SM00411">
    <property type="entry name" value="BHL"/>
    <property type="match status" value="1"/>
</dbReference>
<dbReference type="SUPFAM" id="SSF47729">
    <property type="entry name" value="IHF-like DNA-binding proteins"/>
    <property type="match status" value="1"/>
</dbReference>
<dbReference type="PROSITE" id="PS00045">
    <property type="entry name" value="HISTONE_LIKE"/>
    <property type="match status" value="1"/>
</dbReference>
<feature type="chain" id="PRO_1000122122" description="Integration host factor subunit alpha">
    <location>
        <begin position="1"/>
        <end position="98"/>
    </location>
</feature>
<sequence>MTALTKADMADHLSELTSLNRREAKQMVELFFDEISQALIAGEQVKLSGFGNFELRDKRERPGRNPKTGEEIPISARRVVTFRAGQKFRQRVGNEQID</sequence>
<reference key="1">
    <citation type="journal article" date="2008" name="PLoS ONE">
        <title>Comparative analysis of Acinetobacters: three genomes for three lifestyles.</title>
        <authorList>
            <person name="Vallenet D."/>
            <person name="Nordmann P."/>
            <person name="Barbe V."/>
            <person name="Poirel L."/>
            <person name="Mangenot S."/>
            <person name="Bataille E."/>
            <person name="Dossat C."/>
            <person name="Gas S."/>
            <person name="Kreimeyer A."/>
            <person name="Lenoble P."/>
            <person name="Oztas S."/>
            <person name="Poulain J."/>
            <person name="Segurens B."/>
            <person name="Robert C."/>
            <person name="Abergel C."/>
            <person name="Claverie J.-M."/>
            <person name="Raoult D."/>
            <person name="Medigue C."/>
            <person name="Weissenbach J."/>
            <person name="Cruveiller S."/>
        </authorList>
    </citation>
    <scope>NUCLEOTIDE SEQUENCE [LARGE SCALE GENOMIC DNA]</scope>
    <source>
        <strain>SDF</strain>
    </source>
</reference>
<name>IHFA_ACIBS</name>